<name>MMPLC_MYCTU</name>
<feature type="chain" id="PRO_0000103580" description="Probable transport protein MmpL12">
    <location>
        <begin position="1"/>
        <end position="1146"/>
    </location>
</feature>
<feature type="transmembrane region" description="Helical" evidence="1">
    <location>
        <begin position="25"/>
        <end position="45"/>
    </location>
</feature>
<feature type="transmembrane region" description="Helical" evidence="1">
    <location>
        <begin position="206"/>
        <end position="226"/>
    </location>
</feature>
<feature type="transmembrane region" description="Helical" evidence="1">
    <location>
        <begin position="254"/>
        <end position="274"/>
    </location>
</feature>
<feature type="transmembrane region" description="Helical" evidence="1">
    <location>
        <begin position="298"/>
        <end position="318"/>
    </location>
</feature>
<feature type="transmembrane region" description="Helical" evidence="1">
    <location>
        <begin position="330"/>
        <end position="350"/>
    </location>
</feature>
<feature type="transmembrane region" description="Helical" evidence="1">
    <location>
        <begin position="382"/>
        <end position="402"/>
    </location>
</feature>
<feature type="transmembrane region" description="Helical" evidence="1">
    <location>
        <begin position="826"/>
        <end position="846"/>
    </location>
</feature>
<feature type="transmembrane region" description="Helical" evidence="1">
    <location>
        <begin position="850"/>
        <end position="870"/>
    </location>
</feature>
<feature type="transmembrane region" description="Helical" evidence="1">
    <location>
        <begin position="883"/>
        <end position="903"/>
    </location>
</feature>
<feature type="transmembrane region" description="Helical" evidence="1">
    <location>
        <begin position="928"/>
        <end position="948"/>
    </location>
</feature>
<feature type="transmembrane region" description="Helical" evidence="1">
    <location>
        <begin position="949"/>
        <end position="969"/>
    </location>
</feature>
<comment type="subcellular location">
    <subcellularLocation>
        <location evidence="2">Cell membrane</location>
        <topology evidence="1">Multi-pass membrane protein</topology>
    </subcellularLocation>
</comment>
<comment type="similarity">
    <text evidence="2">Belongs to the resistance-nodulation-cell division (RND) (TC 2.A.6) family. MmpL subfamily.</text>
</comment>
<keyword id="KW-1003">Cell membrane</keyword>
<keyword id="KW-0472">Membrane</keyword>
<keyword id="KW-1185">Reference proteome</keyword>
<keyword id="KW-0812">Transmembrane</keyword>
<keyword id="KW-1133">Transmembrane helix</keyword>
<keyword id="KW-0813">Transport</keyword>
<dbReference type="EMBL" id="AL123456">
    <property type="protein sequence ID" value="CCP44286.1"/>
    <property type="molecule type" value="Genomic_DNA"/>
</dbReference>
<dbReference type="PIR" id="B70723">
    <property type="entry name" value="B70723"/>
</dbReference>
<dbReference type="RefSeq" id="NP_216038.1">
    <property type="nucleotide sequence ID" value="NC_000962.3"/>
</dbReference>
<dbReference type="RefSeq" id="WP_003898915.1">
    <property type="nucleotide sequence ID" value="NZ_NVQJ01000004.1"/>
</dbReference>
<dbReference type="SMR" id="P9WJT7"/>
<dbReference type="STRING" id="83332.Rv1522c"/>
<dbReference type="PaxDb" id="83332-Rv1522c"/>
<dbReference type="DNASU" id="886445"/>
<dbReference type="GeneID" id="886445"/>
<dbReference type="KEGG" id="mtu:Rv1522c"/>
<dbReference type="KEGG" id="mtv:RVBD_1522c"/>
<dbReference type="TubercuList" id="Rv1522c"/>
<dbReference type="eggNOG" id="COG1033">
    <property type="taxonomic scope" value="Bacteria"/>
</dbReference>
<dbReference type="eggNOG" id="COG1511">
    <property type="taxonomic scope" value="Bacteria"/>
</dbReference>
<dbReference type="eggNOG" id="COG2409">
    <property type="taxonomic scope" value="Bacteria"/>
</dbReference>
<dbReference type="InParanoid" id="P9WJT7"/>
<dbReference type="OrthoDB" id="2365435at2"/>
<dbReference type="PhylomeDB" id="P9WJT7"/>
<dbReference type="Proteomes" id="UP000001584">
    <property type="component" value="Chromosome"/>
</dbReference>
<dbReference type="GO" id="GO:0005829">
    <property type="term" value="C:cytosol"/>
    <property type="evidence" value="ECO:0007005"/>
    <property type="project" value="MTBBASE"/>
</dbReference>
<dbReference type="GO" id="GO:0009274">
    <property type="term" value="C:peptidoglycan-based cell wall"/>
    <property type="evidence" value="ECO:0007005"/>
    <property type="project" value="MTBBASE"/>
</dbReference>
<dbReference type="GO" id="GO:0005886">
    <property type="term" value="C:plasma membrane"/>
    <property type="evidence" value="ECO:0007669"/>
    <property type="project" value="UniProtKB-SubCell"/>
</dbReference>
<dbReference type="FunFam" id="1.20.1640.10:FF:000018">
    <property type="entry name" value="Transmembrane transport protein MmpL10"/>
    <property type="match status" value="1"/>
</dbReference>
<dbReference type="FunFam" id="1.20.1640.10:FF:000020">
    <property type="entry name" value="Transmembrane transport protein MmpL10"/>
    <property type="match status" value="1"/>
</dbReference>
<dbReference type="Gene3D" id="1.20.1640.10">
    <property type="entry name" value="Multidrug efflux transporter AcrB transmembrane domain"/>
    <property type="match status" value="2"/>
</dbReference>
<dbReference type="InterPro" id="IPR004869">
    <property type="entry name" value="MMPL_dom"/>
</dbReference>
<dbReference type="InterPro" id="IPR004707">
    <property type="entry name" value="MmpL_fam"/>
</dbReference>
<dbReference type="InterPro" id="IPR050545">
    <property type="entry name" value="Mycobact_MmpL"/>
</dbReference>
<dbReference type="InterPro" id="IPR000731">
    <property type="entry name" value="SSD"/>
</dbReference>
<dbReference type="NCBIfam" id="TIGR00833">
    <property type="entry name" value="actII"/>
    <property type="match status" value="1"/>
</dbReference>
<dbReference type="PANTHER" id="PTHR33406">
    <property type="entry name" value="MEMBRANE PROTEIN MJ1562-RELATED"/>
    <property type="match status" value="1"/>
</dbReference>
<dbReference type="PANTHER" id="PTHR33406:SF6">
    <property type="entry name" value="MEMBRANE PROTEIN YDGH-RELATED"/>
    <property type="match status" value="1"/>
</dbReference>
<dbReference type="Pfam" id="PF03176">
    <property type="entry name" value="MMPL"/>
    <property type="match status" value="2"/>
</dbReference>
<dbReference type="SUPFAM" id="SSF82866">
    <property type="entry name" value="Multidrug efflux transporter AcrB transmembrane domain"/>
    <property type="match status" value="2"/>
</dbReference>
<dbReference type="PROSITE" id="PS50156">
    <property type="entry name" value="SSD"/>
    <property type="match status" value="1"/>
</dbReference>
<protein>
    <recommendedName>
        <fullName evidence="2">Probable transport protein MmpL12</fullName>
    </recommendedName>
</protein>
<evidence type="ECO:0000255" key="1"/>
<evidence type="ECO:0000305" key="2"/>
<proteinExistence type="inferred from homology"/>
<gene>
    <name type="primary">mmpL12</name>
    <name type="ordered locus">Rv1522c</name>
    <name type="ORF">MTCY19G5.06</name>
</gene>
<accession>P9WJT7</accession>
<accession>L0T6X0</accession>
<accession>Q50585</accession>
<reference key="1">
    <citation type="journal article" date="1998" name="Nature">
        <title>Deciphering the biology of Mycobacterium tuberculosis from the complete genome sequence.</title>
        <authorList>
            <person name="Cole S.T."/>
            <person name="Brosch R."/>
            <person name="Parkhill J."/>
            <person name="Garnier T."/>
            <person name="Churcher C.M."/>
            <person name="Harris D.E."/>
            <person name="Gordon S.V."/>
            <person name="Eiglmeier K."/>
            <person name="Gas S."/>
            <person name="Barry C.E. III"/>
            <person name="Tekaia F."/>
            <person name="Badcock K."/>
            <person name="Basham D."/>
            <person name="Brown D."/>
            <person name="Chillingworth T."/>
            <person name="Connor R."/>
            <person name="Davies R.M."/>
            <person name="Devlin K."/>
            <person name="Feltwell T."/>
            <person name="Gentles S."/>
            <person name="Hamlin N."/>
            <person name="Holroyd S."/>
            <person name="Hornsby T."/>
            <person name="Jagels K."/>
            <person name="Krogh A."/>
            <person name="McLean J."/>
            <person name="Moule S."/>
            <person name="Murphy L.D."/>
            <person name="Oliver S."/>
            <person name="Osborne J."/>
            <person name="Quail M.A."/>
            <person name="Rajandream M.A."/>
            <person name="Rogers J."/>
            <person name="Rutter S."/>
            <person name="Seeger K."/>
            <person name="Skelton S."/>
            <person name="Squares S."/>
            <person name="Squares R."/>
            <person name="Sulston J.E."/>
            <person name="Taylor K."/>
            <person name="Whitehead S."/>
            <person name="Barrell B.G."/>
        </authorList>
    </citation>
    <scope>NUCLEOTIDE SEQUENCE [LARGE SCALE GENOMIC DNA]</scope>
    <source>
        <strain>ATCC 25618 / H37Rv</strain>
    </source>
</reference>
<organism>
    <name type="scientific">Mycobacterium tuberculosis (strain ATCC 25618 / H37Rv)</name>
    <dbReference type="NCBI Taxonomy" id="83332"/>
    <lineage>
        <taxon>Bacteria</taxon>
        <taxon>Bacillati</taxon>
        <taxon>Actinomycetota</taxon>
        <taxon>Actinomycetes</taxon>
        <taxon>Mycobacteriales</taxon>
        <taxon>Mycobacteriaceae</taxon>
        <taxon>Mycobacterium</taxon>
        <taxon>Mycobacterium tuberculosis complex</taxon>
    </lineage>
</organism>
<sequence>MARHDEAKAGGLFDRIGNFVVRWPLIVIGCWIAVAAALTLLLPTLQAQAAKREQAPLPPGAPSMVLQKEMSAAFQEKIETSALLLVLLTNENGLGPADEAVYRKLIENLRADTQDKISVQDFLAVPEMKELLASKDNKAWNLPITFAGDAASPETQAAFKRVAAIVKQTVAGTSLTVHLSGPIATVADLTELGEKDVRIIEIGTAVSVLIILILVYRNLVTMLVPLATIGASVVTAQGTLSGLAEFGLAVNMQAIVFMSAVMIGAGTDYAVFLISRYHDYVRHGEKSDMAVKKALMSIGKVITASAATVAVTFLAMVFTKLEVFSAVGPAIAVAITVSLLGAVTLLPAILTLTGRRGWIKPRRDLTSRMWRRSGVRIVRRSTIHLVGSLIVLVALAGCTLLIRFNYDDLKTVPQHVESVKGYEAMNRHFPMNAMTPMVLFIKSPRDLRTPGALADIEMMSREIAELPNIVMVRGLTRPNGEPLKETKVSFQAGEVGGKLDEATTLLEEHGGELDQLTGGAHQLADALAQIRNEINGAVASSSGIVNTLQAMMDLMGGDKTIRQLENASQYVGRMRALGDNLSGTVTDAEQIATWASPMVNALNSSPVCNSDPACRTSRAQLAAIVQAQDDGLLRSIRALAVTLQQTQEYQTLARTVSTLDGQLKQVVSTLKAVDGLPTKLAQMQQGANALADGSAALAAGVQELVDQVKKMGSGLNEAADFLLGIKRDADKPSMAGFNIPPQIFSRDEFKKGAQIFLSADGHAARYFVQSALNPATTEAMDQVNDILRVADSARPNTELEDATIGLAGVPTALRDIRDYYNSDMKFIVIATIVIVFLILVILLRALVAPIYLIGSVLISYLSALGIGTLVFQLILGQEMHWSLPGLSFILLVAIGADYNMLLISRIRDESPHGIRIGVIRTVGSTGGVITSAGLIFAASMFGLVGASINTMAQAGFTIGIGIVLDTFLVRTVTVPALTTMIGRANWWPSELGRDPSTPPTKADRWLRRVKGHRRKAPIPAPKPPHTKVVRNTNGHASKAATKSVPNGKPADLAEGNGEYLIDHLRRHSLPLFGYAAMPAYDVVDGVSKPNGDGAHIGKEPVDHLLGHSLPLFGLAGLPSYDRWDDTSIGEPAVGHAGSKPDAKLST</sequence>